<organism>
    <name type="scientific">Cutibacterium acnes (strain DSM 16379 / KPA171202)</name>
    <name type="common">Propionibacterium acnes</name>
    <dbReference type="NCBI Taxonomy" id="267747"/>
    <lineage>
        <taxon>Bacteria</taxon>
        <taxon>Bacillati</taxon>
        <taxon>Actinomycetota</taxon>
        <taxon>Actinomycetes</taxon>
        <taxon>Propionibacteriales</taxon>
        <taxon>Propionibacteriaceae</taxon>
        <taxon>Cutibacterium</taxon>
    </lineage>
</organism>
<protein>
    <recommendedName>
        <fullName evidence="1">Putative N-acetylmannosamine-6-phosphate 2-epimerase</fullName>
        <ecNumber evidence="1">5.1.3.9</ecNumber>
    </recommendedName>
    <alternativeName>
        <fullName evidence="1">ManNAc-6-P epimerase</fullName>
    </alternativeName>
</protein>
<reference key="1">
    <citation type="journal article" date="2004" name="Science">
        <title>The complete genome sequence of Propionibacterium acnes, a commensal of human skin.</title>
        <authorList>
            <person name="Brueggemann H."/>
            <person name="Henne A."/>
            <person name="Hoster F."/>
            <person name="Liesegang H."/>
            <person name="Wiezer A."/>
            <person name="Strittmatter A."/>
            <person name="Hujer S."/>
            <person name="Duerre P."/>
            <person name="Gottschalk G."/>
        </authorList>
    </citation>
    <scope>NUCLEOTIDE SEQUENCE [LARGE SCALE GENOMIC DNA]</scope>
    <source>
        <strain>DSM 16379 / KPA171202</strain>
    </source>
</reference>
<keyword id="KW-0119">Carbohydrate metabolism</keyword>
<keyword id="KW-0413">Isomerase</keyword>
<proteinExistence type="inferred from homology"/>
<evidence type="ECO:0000255" key="1">
    <source>
        <dbReference type="HAMAP-Rule" id="MF_01235"/>
    </source>
</evidence>
<accession>Q6A6A0</accession>
<dbReference type="EC" id="5.1.3.9" evidence="1"/>
<dbReference type="EMBL" id="AE017283">
    <property type="protein sequence ID" value="AAT83713.1"/>
    <property type="molecule type" value="Genomic_DNA"/>
</dbReference>
<dbReference type="RefSeq" id="WP_002518076.1">
    <property type="nucleotide sequence ID" value="NZ_CP025935.1"/>
</dbReference>
<dbReference type="SMR" id="Q6A6A0"/>
<dbReference type="EnsemblBacteria" id="AAT83713">
    <property type="protein sequence ID" value="AAT83713"/>
    <property type="gene ID" value="PPA1997"/>
</dbReference>
<dbReference type="KEGG" id="pac:PPA1997"/>
<dbReference type="eggNOG" id="COG3010">
    <property type="taxonomic scope" value="Bacteria"/>
</dbReference>
<dbReference type="HOGENOM" id="CLU_086300_1_0_11"/>
<dbReference type="UniPathway" id="UPA00629">
    <property type="reaction ID" value="UER00682"/>
</dbReference>
<dbReference type="Proteomes" id="UP000000603">
    <property type="component" value="Chromosome"/>
</dbReference>
<dbReference type="GO" id="GO:0005829">
    <property type="term" value="C:cytosol"/>
    <property type="evidence" value="ECO:0007669"/>
    <property type="project" value="TreeGrafter"/>
</dbReference>
<dbReference type="GO" id="GO:0047465">
    <property type="term" value="F:N-acylglucosamine-6-phosphate 2-epimerase activity"/>
    <property type="evidence" value="ECO:0007669"/>
    <property type="project" value="UniProtKB-EC"/>
</dbReference>
<dbReference type="GO" id="GO:0005975">
    <property type="term" value="P:carbohydrate metabolic process"/>
    <property type="evidence" value="ECO:0007669"/>
    <property type="project" value="UniProtKB-UniRule"/>
</dbReference>
<dbReference type="GO" id="GO:0006053">
    <property type="term" value="P:N-acetylmannosamine catabolic process"/>
    <property type="evidence" value="ECO:0007669"/>
    <property type="project" value="TreeGrafter"/>
</dbReference>
<dbReference type="GO" id="GO:0019262">
    <property type="term" value="P:N-acetylneuraminate catabolic process"/>
    <property type="evidence" value="ECO:0007669"/>
    <property type="project" value="UniProtKB-UniRule"/>
</dbReference>
<dbReference type="CDD" id="cd04729">
    <property type="entry name" value="NanE"/>
    <property type="match status" value="1"/>
</dbReference>
<dbReference type="Gene3D" id="3.20.20.70">
    <property type="entry name" value="Aldolase class I"/>
    <property type="match status" value="1"/>
</dbReference>
<dbReference type="HAMAP" id="MF_01235">
    <property type="entry name" value="ManNAc6P_epimer"/>
    <property type="match status" value="1"/>
</dbReference>
<dbReference type="InterPro" id="IPR013785">
    <property type="entry name" value="Aldolase_TIM"/>
</dbReference>
<dbReference type="InterPro" id="IPR007260">
    <property type="entry name" value="NanE"/>
</dbReference>
<dbReference type="InterPro" id="IPR011060">
    <property type="entry name" value="RibuloseP-bd_barrel"/>
</dbReference>
<dbReference type="NCBIfam" id="NF002231">
    <property type="entry name" value="PRK01130.1"/>
    <property type="match status" value="1"/>
</dbReference>
<dbReference type="PANTHER" id="PTHR36204">
    <property type="entry name" value="N-ACETYLMANNOSAMINE-6-PHOSPHATE 2-EPIMERASE-RELATED"/>
    <property type="match status" value="1"/>
</dbReference>
<dbReference type="PANTHER" id="PTHR36204:SF1">
    <property type="entry name" value="N-ACETYLMANNOSAMINE-6-PHOSPHATE 2-EPIMERASE-RELATED"/>
    <property type="match status" value="1"/>
</dbReference>
<dbReference type="Pfam" id="PF04131">
    <property type="entry name" value="NanE"/>
    <property type="match status" value="1"/>
</dbReference>
<dbReference type="SUPFAM" id="SSF51366">
    <property type="entry name" value="Ribulose-phoshate binding barrel"/>
    <property type="match status" value="1"/>
</dbReference>
<gene>
    <name evidence="1" type="primary">nanE</name>
    <name type="ordered locus">PPA1997</name>
</gene>
<name>NANE_CUTAK</name>
<comment type="function">
    <text evidence="1">Converts N-acetylmannosamine-6-phosphate (ManNAc-6-P) to N-acetylglucosamine-6-phosphate (GlcNAc-6-P).</text>
</comment>
<comment type="catalytic activity">
    <reaction evidence="1">
        <text>an N-acyl-D-glucosamine 6-phosphate = an N-acyl-D-mannosamine 6-phosphate</text>
        <dbReference type="Rhea" id="RHEA:23932"/>
        <dbReference type="ChEBI" id="CHEBI:57599"/>
        <dbReference type="ChEBI" id="CHEBI:57666"/>
        <dbReference type="EC" id="5.1.3.9"/>
    </reaction>
</comment>
<comment type="pathway">
    <text evidence="1">Amino-sugar metabolism; N-acetylneuraminate degradation; D-fructose 6-phosphate from N-acetylneuraminate: step 3/5.</text>
</comment>
<comment type="similarity">
    <text evidence="1">Belongs to the NanE family.</text>
</comment>
<feature type="chain" id="PRO_0000179790" description="Putative N-acetylmannosamine-6-phosphate 2-epimerase">
    <location>
        <begin position="1"/>
        <end position="229"/>
    </location>
</feature>
<sequence length="229" mass="24056">MSGFTDRIIASMAGGLVVSCQAYPGEPLRHPETMAQMAAAVEAGGAVAVRAQGLSDVSAVKGRVSVPVVGIWKEGDEGIYITPTLRHARCVSAAGADVVALDGTRRERADGLSLAETIERLKREYDVVVMADCGSVDDGLFAAEAGADLIGTTLCGYTGERPKTDGPDYEVIEALVKKLDGDRPVIAEGRIHTPDQARRAMDLGAHAVVVGTAITHPTSITGWFRDALR</sequence>